<protein>
    <recommendedName>
        <fullName evidence="11">Propionyl-CoA carboxylase beta chain, mitochondrial</fullName>
        <shortName>PCCase subunit beta</shortName>
        <ecNumber evidence="9">6.4.1.3</ecNumber>
    </recommendedName>
    <alternativeName>
        <fullName>Propanoyl-CoA:carbon dioxide ligase subunit beta</fullName>
    </alternativeName>
</protein>
<organism>
    <name type="scientific">Sus scrofa</name>
    <name type="common">Pig</name>
    <dbReference type="NCBI Taxonomy" id="9823"/>
    <lineage>
        <taxon>Eukaryota</taxon>
        <taxon>Metazoa</taxon>
        <taxon>Chordata</taxon>
        <taxon>Craniata</taxon>
        <taxon>Vertebrata</taxon>
        <taxon>Euteleostomi</taxon>
        <taxon>Mammalia</taxon>
        <taxon>Eutheria</taxon>
        <taxon>Laurasiatheria</taxon>
        <taxon>Artiodactyla</taxon>
        <taxon>Suina</taxon>
        <taxon>Suidae</taxon>
        <taxon>Sus</taxon>
    </lineage>
</organism>
<keyword id="KW-0007">Acetylation</keyword>
<keyword id="KW-0067">ATP-binding</keyword>
<keyword id="KW-0436">Ligase</keyword>
<keyword id="KW-0496">Mitochondrion</keyword>
<keyword id="KW-0547">Nucleotide-binding</keyword>
<keyword id="KW-0597">Phosphoprotein</keyword>
<keyword id="KW-1185">Reference proteome</keyword>
<keyword id="KW-0809">Transit peptide</keyword>
<name>PCCB_PIG</name>
<feature type="transit peptide" description="Mitochondrion" evidence="1">
    <location>
        <begin position="1"/>
        <end position="28"/>
    </location>
</feature>
<feature type="chain" id="PRO_0000000295" description="Propionyl-CoA carboxylase beta chain, mitochondrial">
    <location>
        <begin position="29"/>
        <end position="539"/>
    </location>
</feature>
<feature type="domain" description="CoA carboxyltransferase N-terminal" evidence="6">
    <location>
        <begin position="32"/>
        <end position="290"/>
    </location>
</feature>
<feature type="domain" description="CoA carboxyltransferase C-terminal" evidence="7">
    <location>
        <begin position="294"/>
        <end position="533"/>
    </location>
</feature>
<feature type="region of interest" description="Carboxyltransferase" evidence="8">
    <location>
        <begin position="32"/>
        <end position="533"/>
    </location>
</feature>
<feature type="region of interest" description="Acyl-CoA binding" evidence="5">
    <location>
        <begin position="325"/>
        <end position="358"/>
    </location>
</feature>
<feature type="modified residue" description="Phosphoserine" evidence="2">
    <location>
        <position position="71"/>
    </location>
</feature>
<feature type="modified residue" description="N6-acetyllysine; alternate" evidence="4">
    <location>
        <position position="99"/>
    </location>
</feature>
<feature type="modified residue" description="N6-succinyllysine; alternate" evidence="4">
    <location>
        <position position="99"/>
    </location>
</feature>
<feature type="modified residue" description="N6-acetyllysine; alternate" evidence="4">
    <location>
        <position position="474"/>
    </location>
</feature>
<feature type="modified residue" description="N6-succinyllysine; alternate" evidence="4">
    <location>
        <position position="474"/>
    </location>
</feature>
<feature type="modified residue" description="N6-acetyllysine; alternate" evidence="4">
    <location>
        <position position="489"/>
    </location>
</feature>
<feature type="modified residue" description="N6-succinyllysine; alternate" evidence="4">
    <location>
        <position position="489"/>
    </location>
</feature>
<proteinExistence type="evidence at protein level"/>
<accession>P79384</accession>
<evidence type="ECO:0000250" key="1"/>
<evidence type="ECO:0000250" key="2">
    <source>
        <dbReference type="UniProtKB" id="P05166"/>
    </source>
</evidence>
<evidence type="ECO:0000250" key="3">
    <source>
        <dbReference type="UniProtKB" id="Q168G2"/>
    </source>
</evidence>
<evidence type="ECO:0000250" key="4">
    <source>
        <dbReference type="UniProtKB" id="Q99MN9"/>
    </source>
</evidence>
<evidence type="ECO:0000255" key="5"/>
<evidence type="ECO:0000255" key="6">
    <source>
        <dbReference type="PROSITE-ProRule" id="PRU01136"/>
    </source>
</evidence>
<evidence type="ECO:0000255" key="7">
    <source>
        <dbReference type="PROSITE-ProRule" id="PRU01137"/>
    </source>
</evidence>
<evidence type="ECO:0000255" key="8">
    <source>
        <dbReference type="PROSITE-ProRule" id="PRU01138"/>
    </source>
</evidence>
<evidence type="ECO:0000269" key="9">
    <source>
    </source>
</evidence>
<evidence type="ECO:0000305" key="10"/>
<evidence type="ECO:0000305" key="11">
    <source>
    </source>
</evidence>
<comment type="function">
    <text evidence="3 9">This is one of the 2 subunits of the biotin-dependent propionyl-CoA carboxylase (PCC), a mitochondrial enzyme involved in the catabolism of odd chain fatty acids, branched-chain amino acids isoleucine, threonine, methionine, and valine and other metabolites (PubMed:13752080). Propionyl-CoA carboxylase catalyzes the carboxylation of propionyl-CoA/propanoyl-CoA to D-methylmalonyl-CoA/(S)-methylmalonyl-CoA (PubMed:13752080). Within the holoenzyme, the alpha subunit catalyzes the ATP-dependent carboxylation of the biotin carried by the biotin carboxyl carrier (BCC) domain, while the beta subunit then transfers the carboxyl group from carboxylated biotin to propionyl-CoA (By similarity). Propionyl-CoA carboxylase also significantly acts on butyryl-CoA/butanoyl-CoA, which is converted to ethylmalonyl-CoA/(2S)-ethylmalonyl-CoA at a much lower rate (PubMed:13752080). Other alternative minor substrates include (2E)-butenoyl-CoA/crotonoyl-CoA (PubMed:13752080).</text>
</comment>
<comment type="catalytic activity">
    <reaction evidence="9">
        <text>propanoyl-CoA + hydrogencarbonate + ATP = (S)-methylmalonyl-CoA + ADP + phosphate + H(+)</text>
        <dbReference type="Rhea" id="RHEA:23720"/>
        <dbReference type="ChEBI" id="CHEBI:15378"/>
        <dbReference type="ChEBI" id="CHEBI:17544"/>
        <dbReference type="ChEBI" id="CHEBI:30616"/>
        <dbReference type="ChEBI" id="CHEBI:43474"/>
        <dbReference type="ChEBI" id="CHEBI:57327"/>
        <dbReference type="ChEBI" id="CHEBI:57392"/>
        <dbReference type="ChEBI" id="CHEBI:456216"/>
        <dbReference type="EC" id="6.4.1.3"/>
    </reaction>
    <physiologicalReaction direction="left-to-right" evidence="11">
        <dbReference type="Rhea" id="RHEA:23721"/>
    </physiologicalReaction>
</comment>
<comment type="catalytic activity">
    <reaction evidence="11">
        <text>butanoyl-CoA + hydrogencarbonate + ATP = (2S)-ethylmalonyl-CoA + ADP + phosphate + H(+)</text>
        <dbReference type="Rhea" id="RHEA:59520"/>
        <dbReference type="ChEBI" id="CHEBI:15378"/>
        <dbReference type="ChEBI" id="CHEBI:17544"/>
        <dbReference type="ChEBI" id="CHEBI:30616"/>
        <dbReference type="ChEBI" id="CHEBI:43474"/>
        <dbReference type="ChEBI" id="CHEBI:57371"/>
        <dbReference type="ChEBI" id="CHEBI:60909"/>
        <dbReference type="ChEBI" id="CHEBI:456216"/>
    </reaction>
    <physiologicalReaction direction="left-to-right" evidence="11">
        <dbReference type="Rhea" id="RHEA:59521"/>
    </physiologicalReaction>
</comment>
<comment type="biophysicochemical properties">
    <kinetics>
        <KM evidence="9">0.2 mM for propanoyl-CoA</KM>
        <KM evidence="9">1.5 mM for butanoyl-CoA</KM>
    </kinetics>
    <phDependence>
        <text evidence="9">Optimum pH is 8.0-8.2 for the propionyl-CoA carboxylase activity as measured with the holoenzyme.</text>
    </phDependence>
</comment>
<comment type="pathway">
    <text evidence="9">Metabolic intermediate metabolism; propanoyl-CoA degradation; succinyl-CoA from propanoyl-CoA: step 1/3.</text>
</comment>
<comment type="subunit">
    <text evidence="2">The holoenzyme is a dodecamer composed of 6 PCCA/alpha subunits and 6 PCCB/beta subunits.</text>
</comment>
<comment type="subcellular location">
    <subcellularLocation>
        <location evidence="11">Mitochondrion matrix</location>
    </subcellularLocation>
</comment>
<comment type="domain">
    <text evidence="3">The beta subunit contains the carboxyl transferase (CT) domain.</text>
</comment>
<comment type="similarity">
    <text evidence="10">Belongs to the AccD/PCCB family.</text>
</comment>
<gene>
    <name evidence="2" type="primary">PCCB</name>
</gene>
<sequence length="539" mass="58590">MAAAVRVTAARARLRVVVRSLHAGVRSLCTQPVSVNERIENKRQAALLGGGQRRIDSQHKRGKLTARERISLLLDPGSFIESDMFVEHRCADFGMAADKNKFPGDSVVTGRGRINGRLVYVFSQDFTVFGGSLSGAHAQKICKIMDQAMTVGAPVIGLNDSGGARIQEGVESLAGYADIFLRNVSASGVIPQISLIMGPCAGGAVYSPALTDFTFMVKDTSYLFITGPDVVKSVTNEDVTQEELGGARTHTTMSGVAHRAFDNDVDALCNLREFFNYLPLSNQDPAPIRECHDPSDRLVPELDTVVPLESTRAYDMVDIIYSIVDERDFFEIMPNYAKNIIVGFARMNGRTVGIVGNQPKVASGCLDINSSVKGARFVRFCDAFNIPLITFVDVPGFLPGTAQEYGGIIRHGAKLLYAFAEATVPKITVITRKAYGGAYDVMSSKHLCGDTNYAWPTAEIAVMGAKGAVEIIFKGHENVEAAQAEYIEKFANPFPAAVRGFVDDIIQPSSTRARICCDLDVLASKKVQRPWRKHANIPL</sequence>
<dbReference type="EC" id="6.4.1.3" evidence="9"/>
<dbReference type="EMBL" id="AB000886">
    <property type="protein sequence ID" value="BAA19203.1"/>
    <property type="molecule type" value="mRNA"/>
</dbReference>
<dbReference type="RefSeq" id="NP_999066.1">
    <property type="nucleotide sequence ID" value="NM_213901.1"/>
</dbReference>
<dbReference type="SMR" id="P79384"/>
<dbReference type="FunCoup" id="P79384">
    <property type="interactions" value="751"/>
</dbReference>
<dbReference type="STRING" id="9823.ENSSSCP00000064111"/>
<dbReference type="PaxDb" id="9823-ENSSSCP00000012423"/>
<dbReference type="PeptideAtlas" id="P79384"/>
<dbReference type="Ensembl" id="ENSSSCT00000090985.2">
    <property type="protein sequence ID" value="ENSSSCP00000072200.2"/>
    <property type="gene ID" value="ENSSSCG00000011653.5"/>
</dbReference>
<dbReference type="Ensembl" id="ENSSSCT00040056794.1">
    <property type="protein sequence ID" value="ENSSSCP00040023610.1"/>
    <property type="gene ID" value="ENSSSCG00040041330.1"/>
</dbReference>
<dbReference type="Ensembl" id="ENSSSCT00065035648.1">
    <property type="protein sequence ID" value="ENSSSCP00065014918.1"/>
    <property type="gene ID" value="ENSSSCG00065026480.1"/>
</dbReference>
<dbReference type="Ensembl" id="ENSSSCT00070021372.1">
    <property type="protein sequence ID" value="ENSSSCP00070017669.1"/>
    <property type="gene ID" value="ENSSSCG00070010911.1"/>
</dbReference>
<dbReference type="Ensembl" id="ENSSSCT00090059444">
    <property type="protein sequence ID" value="ENSSSCP00090037264"/>
    <property type="gene ID" value="ENSSSCG00090033369"/>
</dbReference>
<dbReference type="Ensembl" id="ENSSSCT00105065675">
    <property type="protein sequence ID" value="ENSSSCP00105046782"/>
    <property type="gene ID" value="ENSSSCG00105034257"/>
</dbReference>
<dbReference type="Ensembl" id="ENSSSCT00110072000">
    <property type="protein sequence ID" value="ENSSSCP00110050699"/>
    <property type="gene ID" value="ENSSSCG00110037802"/>
</dbReference>
<dbReference type="Ensembl" id="ENSSSCT00115031492">
    <property type="protein sequence ID" value="ENSSSCP00115029943"/>
    <property type="gene ID" value="ENSSSCG00115017689"/>
</dbReference>
<dbReference type="Ensembl" id="ENSSSCT00130066219">
    <property type="protein sequence ID" value="ENSSSCP00130047508"/>
    <property type="gene ID" value="ENSSSCG00130033793"/>
</dbReference>
<dbReference type="GeneID" id="100158147"/>
<dbReference type="KEGG" id="ssc:100158147"/>
<dbReference type="CTD" id="5096"/>
<dbReference type="VGNC" id="VGNC:91210">
    <property type="gene designation" value="PCCB"/>
</dbReference>
<dbReference type="eggNOG" id="KOG0540">
    <property type="taxonomic scope" value="Eukaryota"/>
</dbReference>
<dbReference type="GeneTree" id="ENSGT00940000157741"/>
<dbReference type="HOGENOM" id="CLU_018822_6_0_1"/>
<dbReference type="InParanoid" id="P79384"/>
<dbReference type="OMA" id="ENTSYMF"/>
<dbReference type="OrthoDB" id="439921at2759"/>
<dbReference type="TreeFam" id="TF314350"/>
<dbReference type="Reactome" id="R-SSC-196780">
    <property type="pathway name" value="Biotin transport and metabolism"/>
</dbReference>
<dbReference type="Reactome" id="R-SSC-71032">
    <property type="pathway name" value="Propionyl-CoA catabolism"/>
</dbReference>
<dbReference type="Reactome" id="R-SSC-9837999">
    <property type="pathway name" value="Mitochondrial protein degradation"/>
</dbReference>
<dbReference type="UniPathway" id="UPA00945">
    <property type="reaction ID" value="UER00908"/>
</dbReference>
<dbReference type="Proteomes" id="UP000008227">
    <property type="component" value="Chromosome 13"/>
</dbReference>
<dbReference type="Proteomes" id="UP000314985">
    <property type="component" value="Chromosome 13"/>
</dbReference>
<dbReference type="Proteomes" id="UP000694570">
    <property type="component" value="Unplaced"/>
</dbReference>
<dbReference type="Proteomes" id="UP000694571">
    <property type="component" value="Unplaced"/>
</dbReference>
<dbReference type="Proteomes" id="UP000694720">
    <property type="component" value="Unplaced"/>
</dbReference>
<dbReference type="Proteomes" id="UP000694722">
    <property type="component" value="Unplaced"/>
</dbReference>
<dbReference type="Proteomes" id="UP000694723">
    <property type="component" value="Unplaced"/>
</dbReference>
<dbReference type="Proteomes" id="UP000694724">
    <property type="component" value="Unplaced"/>
</dbReference>
<dbReference type="Proteomes" id="UP000694725">
    <property type="component" value="Unplaced"/>
</dbReference>
<dbReference type="Proteomes" id="UP000694726">
    <property type="component" value="Unplaced"/>
</dbReference>
<dbReference type="Proteomes" id="UP000694727">
    <property type="component" value="Unplaced"/>
</dbReference>
<dbReference type="Proteomes" id="UP000694728">
    <property type="component" value="Unplaced"/>
</dbReference>
<dbReference type="GO" id="GO:0005759">
    <property type="term" value="C:mitochondrial matrix"/>
    <property type="evidence" value="ECO:0000250"/>
    <property type="project" value="UniProtKB"/>
</dbReference>
<dbReference type="GO" id="GO:0005524">
    <property type="term" value="F:ATP binding"/>
    <property type="evidence" value="ECO:0007669"/>
    <property type="project" value="UniProtKB-KW"/>
</dbReference>
<dbReference type="GO" id="GO:0004658">
    <property type="term" value="F:propionyl-CoA carboxylase activity"/>
    <property type="evidence" value="ECO:0000314"/>
    <property type="project" value="UniProtKB"/>
</dbReference>
<dbReference type="GO" id="GO:0019626">
    <property type="term" value="P:short-chain fatty acid catabolic process"/>
    <property type="evidence" value="ECO:0000305"/>
    <property type="project" value="UniProtKB"/>
</dbReference>
<dbReference type="FunFam" id="3.90.226.10:FF:000017">
    <property type="entry name" value="Propionyl-CoA carboxylase subunit beta 5"/>
    <property type="match status" value="1"/>
</dbReference>
<dbReference type="FunFam" id="3.90.226.10:FF:000016">
    <property type="entry name" value="Propionyl-CoA carboxylase, beta subunit"/>
    <property type="match status" value="1"/>
</dbReference>
<dbReference type="Gene3D" id="3.90.226.10">
    <property type="entry name" value="2-enoyl-CoA Hydratase, Chain A, domain 1"/>
    <property type="match status" value="2"/>
</dbReference>
<dbReference type="InterPro" id="IPR051047">
    <property type="entry name" value="AccD/PCCB"/>
</dbReference>
<dbReference type="InterPro" id="IPR034733">
    <property type="entry name" value="AcCoA_carboxyl_beta"/>
</dbReference>
<dbReference type="InterPro" id="IPR029045">
    <property type="entry name" value="ClpP/crotonase-like_dom_sf"/>
</dbReference>
<dbReference type="InterPro" id="IPR011763">
    <property type="entry name" value="COA_CT_C"/>
</dbReference>
<dbReference type="InterPro" id="IPR011762">
    <property type="entry name" value="COA_CT_N"/>
</dbReference>
<dbReference type="PANTHER" id="PTHR43842">
    <property type="entry name" value="PROPIONYL-COA CARBOXYLASE BETA CHAIN"/>
    <property type="match status" value="1"/>
</dbReference>
<dbReference type="PANTHER" id="PTHR43842:SF2">
    <property type="entry name" value="PROPIONYL-COA CARBOXYLASE BETA CHAIN, MITOCHONDRIAL"/>
    <property type="match status" value="1"/>
</dbReference>
<dbReference type="Pfam" id="PF01039">
    <property type="entry name" value="Carboxyl_trans"/>
    <property type="match status" value="1"/>
</dbReference>
<dbReference type="SUPFAM" id="SSF52096">
    <property type="entry name" value="ClpP/crotonase"/>
    <property type="match status" value="2"/>
</dbReference>
<dbReference type="PROSITE" id="PS50989">
    <property type="entry name" value="COA_CT_CTER"/>
    <property type="match status" value="1"/>
</dbReference>
<dbReference type="PROSITE" id="PS50980">
    <property type="entry name" value="COA_CT_NTER"/>
    <property type="match status" value="1"/>
</dbReference>
<reference key="1">
    <citation type="submission" date="1997-02" db="EMBL/GenBank/DDBJ databases">
        <title>Cloning of the pig propionyl-CoA carboxylase beta chain precursor gene.</title>
        <authorList>
            <person name="Kimura M."/>
            <person name="Kawakami K."/>
            <person name="Suzuki H."/>
            <person name="Hamasima N."/>
        </authorList>
    </citation>
    <scope>NUCLEOTIDE SEQUENCE [MRNA]</scope>
</reference>
<reference key="2">
    <citation type="journal article" date="1961" name="J. Biol. Chem.">
        <title>Metabolism of propionic acid in animal tissues. VIII. Crystalline propionyl carboxylase.</title>
        <authorList>
            <person name="Kaziro Y."/>
            <person name="Ochoa S."/>
            <person name="Warner R.C."/>
            <person name="Chen J.Y."/>
        </authorList>
    </citation>
    <scope>FUNCTION</scope>
    <scope>CATALYTIC ACTIVITY</scope>
    <scope>BIOPHYSICOCHEMICAL PROPERTIES</scope>
    <scope>PATHWAY</scope>
    <scope>SUBCELLULAR LOCATION</scope>
</reference>